<evidence type="ECO:0000255" key="1">
    <source>
        <dbReference type="HAMAP-Rule" id="MF_00328"/>
    </source>
</evidence>
<gene>
    <name evidence="1" type="primary">gmk</name>
    <name type="ordered locus">RT0752</name>
</gene>
<reference key="1">
    <citation type="journal article" date="2004" name="J. Bacteriol.">
        <title>Complete genome sequence of Rickettsia typhi and comparison with sequences of other Rickettsiae.</title>
        <authorList>
            <person name="McLeod M.P."/>
            <person name="Qin X."/>
            <person name="Karpathy S.E."/>
            <person name="Gioia J."/>
            <person name="Highlander S.K."/>
            <person name="Fox G.E."/>
            <person name="McNeill T.Z."/>
            <person name="Jiang H."/>
            <person name="Muzny D."/>
            <person name="Jacob L.S."/>
            <person name="Hawes A.C."/>
            <person name="Sodergren E."/>
            <person name="Gill R."/>
            <person name="Hume J."/>
            <person name="Morgan M."/>
            <person name="Fan G."/>
            <person name="Amin A.G."/>
            <person name="Gibbs R.A."/>
            <person name="Hong C."/>
            <person name="Yu X.-J."/>
            <person name="Walker D.H."/>
            <person name="Weinstock G.M."/>
        </authorList>
    </citation>
    <scope>NUCLEOTIDE SEQUENCE [LARGE SCALE GENOMIC DNA]</scope>
    <source>
        <strain>ATCC VR-144 / Wilmington</strain>
    </source>
</reference>
<proteinExistence type="inferred from homology"/>
<comment type="function">
    <text evidence="1">Essential for recycling GMP and indirectly, cGMP.</text>
</comment>
<comment type="catalytic activity">
    <reaction evidence="1">
        <text>GMP + ATP = GDP + ADP</text>
        <dbReference type="Rhea" id="RHEA:20780"/>
        <dbReference type="ChEBI" id="CHEBI:30616"/>
        <dbReference type="ChEBI" id="CHEBI:58115"/>
        <dbReference type="ChEBI" id="CHEBI:58189"/>
        <dbReference type="ChEBI" id="CHEBI:456216"/>
        <dbReference type="EC" id="2.7.4.8"/>
    </reaction>
</comment>
<comment type="subcellular location">
    <subcellularLocation>
        <location evidence="1">Cytoplasm</location>
    </subcellularLocation>
</comment>
<comment type="similarity">
    <text evidence="1">Belongs to the guanylate kinase family.</text>
</comment>
<organism>
    <name type="scientific">Rickettsia typhi (strain ATCC VR-144 / Wilmington)</name>
    <dbReference type="NCBI Taxonomy" id="257363"/>
    <lineage>
        <taxon>Bacteria</taxon>
        <taxon>Pseudomonadati</taxon>
        <taxon>Pseudomonadota</taxon>
        <taxon>Alphaproteobacteria</taxon>
        <taxon>Rickettsiales</taxon>
        <taxon>Rickettsiaceae</taxon>
        <taxon>Rickettsieae</taxon>
        <taxon>Rickettsia</taxon>
        <taxon>typhus group</taxon>
    </lineage>
</organism>
<feature type="chain" id="PRO_0000170597" description="Guanylate kinase">
    <location>
        <begin position="1"/>
        <end position="197"/>
    </location>
</feature>
<feature type="domain" description="Guanylate kinase-like" evidence="1">
    <location>
        <begin position="7"/>
        <end position="185"/>
    </location>
</feature>
<feature type="binding site" evidence="1">
    <location>
        <begin position="14"/>
        <end position="21"/>
    </location>
    <ligand>
        <name>ATP</name>
        <dbReference type="ChEBI" id="CHEBI:30616"/>
    </ligand>
</feature>
<keyword id="KW-0067">ATP-binding</keyword>
<keyword id="KW-0963">Cytoplasm</keyword>
<keyword id="KW-0418">Kinase</keyword>
<keyword id="KW-0547">Nucleotide-binding</keyword>
<keyword id="KW-0808">Transferase</keyword>
<accession>Q68VY3</accession>
<dbReference type="EC" id="2.7.4.8" evidence="1"/>
<dbReference type="EMBL" id="AE017197">
    <property type="protein sequence ID" value="AAU04209.1"/>
    <property type="molecule type" value="Genomic_DNA"/>
</dbReference>
<dbReference type="RefSeq" id="WP_011191184.1">
    <property type="nucleotide sequence ID" value="NC_006142.1"/>
</dbReference>
<dbReference type="SMR" id="Q68VY3"/>
<dbReference type="KEGG" id="rty:RT0752"/>
<dbReference type="eggNOG" id="COG0194">
    <property type="taxonomic scope" value="Bacteria"/>
</dbReference>
<dbReference type="HOGENOM" id="CLU_001715_1_0_5"/>
<dbReference type="OrthoDB" id="9808150at2"/>
<dbReference type="Proteomes" id="UP000000604">
    <property type="component" value="Chromosome"/>
</dbReference>
<dbReference type="GO" id="GO:0005829">
    <property type="term" value="C:cytosol"/>
    <property type="evidence" value="ECO:0007669"/>
    <property type="project" value="TreeGrafter"/>
</dbReference>
<dbReference type="GO" id="GO:0005524">
    <property type="term" value="F:ATP binding"/>
    <property type="evidence" value="ECO:0007669"/>
    <property type="project" value="UniProtKB-UniRule"/>
</dbReference>
<dbReference type="GO" id="GO:0004385">
    <property type="term" value="F:guanylate kinase activity"/>
    <property type="evidence" value="ECO:0007669"/>
    <property type="project" value="UniProtKB-UniRule"/>
</dbReference>
<dbReference type="CDD" id="cd00071">
    <property type="entry name" value="GMPK"/>
    <property type="match status" value="1"/>
</dbReference>
<dbReference type="FunFam" id="3.30.63.10:FF:000002">
    <property type="entry name" value="Guanylate kinase 1"/>
    <property type="match status" value="1"/>
</dbReference>
<dbReference type="Gene3D" id="3.30.63.10">
    <property type="entry name" value="Guanylate Kinase phosphate binding domain"/>
    <property type="match status" value="1"/>
</dbReference>
<dbReference type="Gene3D" id="3.40.50.300">
    <property type="entry name" value="P-loop containing nucleotide triphosphate hydrolases"/>
    <property type="match status" value="1"/>
</dbReference>
<dbReference type="HAMAP" id="MF_00328">
    <property type="entry name" value="Guanylate_kinase"/>
    <property type="match status" value="1"/>
</dbReference>
<dbReference type="InterPro" id="IPR008145">
    <property type="entry name" value="GK/Ca_channel_bsu"/>
</dbReference>
<dbReference type="InterPro" id="IPR008144">
    <property type="entry name" value="Guanylate_kin-like_dom"/>
</dbReference>
<dbReference type="InterPro" id="IPR017665">
    <property type="entry name" value="Guanylate_kinase"/>
</dbReference>
<dbReference type="InterPro" id="IPR020590">
    <property type="entry name" value="Guanylate_kinase_CS"/>
</dbReference>
<dbReference type="InterPro" id="IPR027417">
    <property type="entry name" value="P-loop_NTPase"/>
</dbReference>
<dbReference type="NCBIfam" id="TIGR03263">
    <property type="entry name" value="guanyl_kin"/>
    <property type="match status" value="1"/>
</dbReference>
<dbReference type="PANTHER" id="PTHR23117:SF13">
    <property type="entry name" value="GUANYLATE KINASE"/>
    <property type="match status" value="1"/>
</dbReference>
<dbReference type="PANTHER" id="PTHR23117">
    <property type="entry name" value="GUANYLATE KINASE-RELATED"/>
    <property type="match status" value="1"/>
</dbReference>
<dbReference type="Pfam" id="PF00625">
    <property type="entry name" value="Guanylate_kin"/>
    <property type="match status" value="1"/>
</dbReference>
<dbReference type="SMART" id="SM00072">
    <property type="entry name" value="GuKc"/>
    <property type="match status" value="1"/>
</dbReference>
<dbReference type="SUPFAM" id="SSF52540">
    <property type="entry name" value="P-loop containing nucleoside triphosphate hydrolases"/>
    <property type="match status" value="1"/>
</dbReference>
<dbReference type="PROSITE" id="PS00856">
    <property type="entry name" value="GUANYLATE_KINASE_1"/>
    <property type="match status" value="1"/>
</dbReference>
<dbReference type="PROSITE" id="PS50052">
    <property type="entry name" value="GUANYLATE_KINASE_2"/>
    <property type="match status" value="1"/>
</dbReference>
<protein>
    <recommendedName>
        <fullName evidence="1">Guanylate kinase</fullName>
        <ecNumber evidence="1">2.7.4.8</ecNumber>
    </recommendedName>
    <alternativeName>
        <fullName evidence="1">GMP kinase</fullName>
    </alternativeName>
</protein>
<name>KGUA_RICTY</name>
<sequence length="197" mass="22892">MQFKHKGLIIILSSPSGTGKSSLAKELLKIDNNLRLSISVTTRKPRLGEVDGINYYFKTDLEFKTLVKQNKFLEYAKIYNDYYGTPKEYVKMLLKQGLDVLFDIDWQGVRSIKKNTNNVVTIFVLPPSLEILEQRLRNRATDNEETIKLRMQSAQHEISYANEYDYVVINDDFGQTLKKIHEIIVAERAKNFSYHAH</sequence>